<feature type="chain" id="PRO_0000048108" description="Tubulin alpha-1B chain">
    <location>
        <begin position="1"/>
        <end position="451"/>
    </location>
</feature>
<feature type="chain" id="PRO_0000437384" description="Detyrosinated tubulin alpha-1B chain" evidence="26 28">
    <location>
        <begin position="1"/>
        <end position="450"/>
    </location>
</feature>
<feature type="region of interest" description="Disordered" evidence="7">
    <location>
        <begin position="432"/>
        <end position="451"/>
    </location>
</feature>
<feature type="short sequence motif" description="MREC motif" evidence="16">
    <location>
        <begin position="1"/>
        <end position="4"/>
    </location>
</feature>
<feature type="active site" evidence="18">
    <location>
        <position position="254"/>
    </location>
</feature>
<feature type="binding site" evidence="21 38">
    <location>
        <position position="10"/>
    </location>
    <ligand>
        <name>GTP</name>
        <dbReference type="ChEBI" id="CHEBI:37565"/>
    </ligand>
</feature>
<feature type="binding site" evidence="18 19 21 30 34 38">
    <location>
        <position position="11"/>
    </location>
    <ligand>
        <name>GTP</name>
        <dbReference type="ChEBI" id="CHEBI:37565"/>
    </ligand>
</feature>
<feature type="binding site" evidence="21 38">
    <location>
        <position position="12"/>
    </location>
    <ligand>
        <name>GTP</name>
        <dbReference type="ChEBI" id="CHEBI:37565"/>
    </ligand>
</feature>
<feature type="binding site" evidence="21 38">
    <location>
        <position position="15"/>
    </location>
    <ligand>
        <name>GTP</name>
        <dbReference type="ChEBI" id="CHEBI:37565"/>
    </ligand>
</feature>
<feature type="binding site" evidence="18 19 30 34">
    <location>
        <position position="71"/>
    </location>
    <ligand>
        <name>GTP</name>
        <dbReference type="ChEBI" id="CHEBI:37565"/>
    </ligand>
</feature>
<feature type="binding site" evidence="18 19 21 30 34 38">
    <location>
        <position position="71"/>
    </location>
    <ligand>
        <name>Mg(2+)</name>
        <dbReference type="ChEBI" id="CHEBI:18420"/>
    </ligand>
</feature>
<feature type="binding site" evidence="21 38">
    <location>
        <position position="99"/>
    </location>
    <ligand>
        <name>GTP</name>
        <dbReference type="ChEBI" id="CHEBI:37565"/>
    </ligand>
</feature>
<feature type="binding site" evidence="18 19 21 30 34 38">
    <location>
        <position position="140"/>
    </location>
    <ligand>
        <name>GTP</name>
        <dbReference type="ChEBI" id="CHEBI:37565"/>
    </ligand>
</feature>
<feature type="binding site" evidence="21 38">
    <location>
        <position position="143"/>
    </location>
    <ligand>
        <name>GTP</name>
        <dbReference type="ChEBI" id="CHEBI:37565"/>
    </ligand>
</feature>
<feature type="binding site" evidence="18 19 21 30 34 38">
    <location>
        <position position="144"/>
    </location>
    <ligand>
        <name>GTP</name>
        <dbReference type="ChEBI" id="CHEBI:37565"/>
    </ligand>
</feature>
<feature type="binding site" evidence="18 19 21 30 34 38">
    <location>
        <position position="145"/>
    </location>
    <ligand>
        <name>GTP</name>
        <dbReference type="ChEBI" id="CHEBI:37565"/>
    </ligand>
</feature>
<feature type="binding site" evidence="21 38">
    <location>
        <position position="146"/>
    </location>
    <ligand>
        <name>GTP</name>
        <dbReference type="ChEBI" id="CHEBI:37565"/>
    </ligand>
</feature>
<feature type="binding site" evidence="18 19 21 30 34 38">
    <location>
        <position position="179"/>
    </location>
    <ligand>
        <name>GTP</name>
        <dbReference type="ChEBI" id="CHEBI:37565"/>
    </ligand>
</feature>
<feature type="binding site" evidence="21 38">
    <location>
        <position position="183"/>
    </location>
    <ligand>
        <name>GTP</name>
        <dbReference type="ChEBI" id="CHEBI:37565"/>
    </ligand>
</feature>
<feature type="binding site" evidence="18 19 21 30 34 38">
    <location>
        <position position="206"/>
    </location>
    <ligand>
        <name>GTP</name>
        <dbReference type="ChEBI" id="CHEBI:37565"/>
    </ligand>
</feature>
<feature type="binding site" evidence="21 38">
    <location>
        <position position="224"/>
    </location>
    <ligand>
        <name>GTP</name>
        <dbReference type="ChEBI" id="CHEBI:37565"/>
    </ligand>
</feature>
<feature type="binding site" evidence="18 19 21 30 34 38">
    <location>
        <position position="228"/>
    </location>
    <ligand>
        <name>GTP</name>
        <dbReference type="ChEBI" id="CHEBI:37565"/>
    </ligand>
</feature>
<feature type="binding site" evidence="21 38">
    <location>
        <position position="252"/>
    </location>
    <ligand>
        <name>GTP</name>
        <dbReference type="ChEBI" id="CHEBI:37565"/>
    </ligand>
</feature>
<feature type="site" description="Involved in polymerization">
    <location>
        <position position="451"/>
    </location>
</feature>
<feature type="modified residue" description="N6,N6,N6-trimethyllysine; alternate" evidence="14">
    <location>
        <position position="40"/>
    </location>
</feature>
<feature type="modified residue" description="N6-acetyllysine; alternate" evidence="10">
    <location>
        <position position="40"/>
    </location>
</feature>
<feature type="modified residue" description="Phosphoserine" evidence="22">
    <location>
        <position position="48"/>
    </location>
</feature>
<feature type="modified residue" description="Phosphoserine" evidence="22">
    <location>
        <position position="232"/>
    </location>
</feature>
<feature type="modified residue" description="3'-nitrotyrosine" evidence="4">
    <location>
        <position position="282"/>
    </location>
</feature>
<feature type="modified residue" description="Omega-N-methylarginine" evidence="22">
    <location>
        <position position="339"/>
    </location>
</feature>
<feature type="modified residue" description="Phosphoserine" evidence="4">
    <location>
        <position position="439"/>
    </location>
</feature>
<feature type="modified residue" description="5-glutamyl polyglutamate" evidence="17">
    <location>
        <position position="443"/>
    </location>
</feature>
<feature type="modified residue" description="5-glutamyl polyglutamate" evidence="3">
    <location>
        <position position="445"/>
    </location>
</feature>
<feature type="modified residue" description="3'-nitrotyrosine" evidence="8">
    <location>
        <position position="451"/>
    </location>
</feature>
<feature type="cross-link" description="Glycyl lysine isopeptide (Lys-Gly) (interchain with G-Cter in ubiquitin)">
    <location>
        <position position="326"/>
    </location>
</feature>
<feature type="cross-link" description="Glycyl lysine isopeptide (Lys-Gly) (interchain with G-Cter in ubiquitin)">
    <location>
        <position position="370"/>
    </location>
</feature>
<feature type="splice variant" id="VSP_055764" description="In isoform 2." evidence="23">
    <location>
        <begin position="108"/>
        <end position="223"/>
    </location>
</feature>
<feature type="mutagenesis site" description="Abolished GTPase activity; microtubules have an expanded lattice with a negative twist and display high binding to microtubule-end binding proteins such as MAPRE3." evidence="18">
    <original>E</original>
    <variation>A</variation>
    <location>
        <position position="254"/>
    </location>
</feature>
<feature type="mutagenesis site" description="Promotes microtubule nucleation efficiency and slows GTP hydrolysis." evidence="20 21">
    <original>E</original>
    <variation>D</variation>
    <location>
        <position position="254"/>
    </location>
</feature>
<feature type="mutagenesis site" description="Abolished GTPase activity; microtubules have an expanded lattice with a positive twist and display low binding to microtubule-end binding proteins such as MAPRE3." evidence="18">
    <original>E</original>
    <variation>N</variation>
    <location>
        <position position="254"/>
    </location>
</feature>
<feature type="sequence conflict" description="In Ref. 1; AAA91576." evidence="24" ref="1">
    <original>G</original>
    <variation>R</variation>
    <location>
        <position position="131"/>
    </location>
</feature>
<feature type="sequence conflict" description="In Ref. 1; AAA91576." evidence="24" ref="1">
    <original>E</original>
    <variation>D</variation>
    <location>
        <position position="290"/>
    </location>
</feature>
<feature type="sequence conflict" description="In Ref. 1; AAA91576." evidence="24" ref="1">
    <original>R</original>
    <variation>G</variation>
    <location>
        <position position="308"/>
    </location>
</feature>
<feature type="sequence conflict" description="In Ref. 1; AAA91576." evidence="24" ref="1">
    <original>S</original>
    <variation>T</variation>
    <location>
        <position position="340"/>
    </location>
</feature>
<feature type="strand" evidence="40">
    <location>
        <begin position="4"/>
        <end position="9"/>
    </location>
</feature>
<feature type="helix" evidence="40">
    <location>
        <begin position="10"/>
        <end position="28"/>
    </location>
</feature>
<feature type="strand" evidence="41">
    <location>
        <begin position="37"/>
        <end position="39"/>
    </location>
</feature>
<feature type="strand" evidence="41">
    <location>
        <begin position="41"/>
        <end position="43"/>
    </location>
</feature>
<feature type="helix" evidence="44">
    <location>
        <begin position="44"/>
        <end position="46"/>
    </location>
</feature>
<feature type="helix" evidence="40">
    <location>
        <begin position="48"/>
        <end position="51"/>
    </location>
</feature>
<feature type="strand" evidence="40">
    <location>
        <begin position="53"/>
        <end position="55"/>
    </location>
</feature>
<feature type="strand" evidence="42">
    <location>
        <begin position="57"/>
        <end position="59"/>
    </location>
</feature>
<feature type="strand" evidence="40">
    <location>
        <begin position="61"/>
        <end position="63"/>
    </location>
</feature>
<feature type="strand" evidence="40">
    <location>
        <begin position="65"/>
        <end position="72"/>
    </location>
</feature>
<feature type="helix" evidence="40">
    <location>
        <begin position="73"/>
        <end position="80"/>
    </location>
</feature>
<feature type="turn" evidence="40">
    <location>
        <begin position="82"/>
        <end position="86"/>
    </location>
</feature>
<feature type="helix" evidence="40">
    <location>
        <begin position="89"/>
        <end position="91"/>
    </location>
</feature>
<feature type="strand" evidence="40">
    <location>
        <begin position="92"/>
        <end position="94"/>
    </location>
</feature>
<feature type="helix" evidence="40">
    <location>
        <begin position="103"/>
        <end position="107"/>
    </location>
</feature>
<feature type="turn" evidence="42">
    <location>
        <begin position="108"/>
        <end position="110"/>
    </location>
</feature>
<feature type="helix" evidence="40">
    <location>
        <begin position="111"/>
        <end position="113"/>
    </location>
</feature>
<feature type="helix" evidence="40">
    <location>
        <begin position="115"/>
        <end position="127"/>
    </location>
</feature>
<feature type="strand" evidence="40">
    <location>
        <begin position="134"/>
        <end position="143"/>
    </location>
</feature>
<feature type="helix" evidence="40">
    <location>
        <begin position="144"/>
        <end position="160"/>
    </location>
</feature>
<feature type="turn" evidence="42">
    <location>
        <begin position="161"/>
        <end position="163"/>
    </location>
</feature>
<feature type="strand" evidence="40">
    <location>
        <begin position="165"/>
        <end position="172"/>
    </location>
</feature>
<feature type="helix" evidence="40">
    <location>
        <begin position="175"/>
        <end position="177"/>
    </location>
</feature>
<feature type="helix" evidence="40">
    <location>
        <begin position="183"/>
        <end position="194"/>
    </location>
</feature>
<feature type="turn" evidence="40">
    <location>
        <begin position="195"/>
        <end position="197"/>
    </location>
</feature>
<feature type="strand" evidence="40">
    <location>
        <begin position="199"/>
        <end position="205"/>
    </location>
</feature>
<feature type="helix" evidence="40">
    <location>
        <begin position="206"/>
        <end position="215"/>
    </location>
</feature>
<feature type="helix" evidence="40">
    <location>
        <begin position="224"/>
        <end position="243"/>
    </location>
</feature>
<feature type="strand" evidence="42">
    <location>
        <begin position="247"/>
        <end position="249"/>
    </location>
</feature>
<feature type="helix" evidence="40">
    <location>
        <begin position="252"/>
        <end position="259"/>
    </location>
</feature>
<feature type="strand" evidence="40">
    <location>
        <begin position="261"/>
        <end position="264"/>
    </location>
</feature>
<feature type="strand" evidence="40">
    <location>
        <begin position="269"/>
        <end position="273"/>
    </location>
</feature>
<feature type="helix" evidence="43">
    <location>
        <begin position="278"/>
        <end position="281"/>
    </location>
</feature>
<feature type="helix" evidence="40">
    <location>
        <begin position="288"/>
        <end position="293"/>
    </location>
</feature>
<feature type="helix" evidence="40">
    <location>
        <begin position="294"/>
        <end position="296"/>
    </location>
</feature>
<feature type="helix" evidence="40">
    <location>
        <begin position="298"/>
        <end position="300"/>
    </location>
</feature>
<feature type="strand" evidence="40">
    <location>
        <begin position="301"/>
        <end position="303"/>
    </location>
</feature>
<feature type="helix" evidence="40">
    <location>
        <begin position="307"/>
        <end position="309"/>
    </location>
</feature>
<feature type="strand" evidence="40">
    <location>
        <begin position="312"/>
        <end position="322"/>
    </location>
</feature>
<feature type="helix" evidence="40">
    <location>
        <begin position="325"/>
        <end position="336"/>
    </location>
</feature>
<feature type="strand" evidence="43">
    <location>
        <begin position="339"/>
        <end position="341"/>
    </location>
</feature>
<feature type="strand" evidence="41">
    <location>
        <begin position="345"/>
        <end position="347"/>
    </location>
</feature>
<feature type="strand" evidence="40">
    <location>
        <begin position="352"/>
        <end position="356"/>
    </location>
</feature>
<feature type="strand" evidence="40">
    <location>
        <begin position="372"/>
        <end position="381"/>
    </location>
</feature>
<feature type="helix" evidence="40">
    <location>
        <begin position="382"/>
        <end position="384"/>
    </location>
</feature>
<feature type="helix" evidence="40">
    <location>
        <begin position="385"/>
        <end position="399"/>
    </location>
</feature>
<feature type="turn" evidence="40">
    <location>
        <begin position="400"/>
        <end position="404"/>
    </location>
</feature>
<feature type="helix" evidence="40">
    <location>
        <begin position="405"/>
        <end position="409"/>
    </location>
</feature>
<feature type="turn" evidence="40">
    <location>
        <begin position="410"/>
        <end position="412"/>
    </location>
</feature>
<feature type="helix" evidence="40">
    <location>
        <begin position="416"/>
        <end position="435"/>
    </location>
</feature>
<feature type="strand" evidence="39">
    <location>
        <begin position="448"/>
        <end position="450"/>
    </location>
</feature>
<evidence type="ECO:0000250" key="1">
    <source>
        <dbReference type="UniProtKB" id="P05213"/>
    </source>
</evidence>
<evidence type="ECO:0000250" key="2">
    <source>
        <dbReference type="UniProtKB" id="P07437"/>
    </source>
</evidence>
<evidence type="ECO:0000250" key="3">
    <source>
        <dbReference type="UniProtKB" id="P68369"/>
    </source>
</evidence>
<evidence type="ECO:0000250" key="4">
    <source>
        <dbReference type="UniProtKB" id="P68373"/>
    </source>
</evidence>
<evidence type="ECO:0000250" key="5">
    <source>
        <dbReference type="UniProtKB" id="P99024"/>
    </source>
</evidence>
<evidence type="ECO:0000250" key="6">
    <source>
        <dbReference type="UniProtKB" id="Q71U36"/>
    </source>
</evidence>
<evidence type="ECO:0000256" key="7">
    <source>
        <dbReference type="SAM" id="MobiDB-lite"/>
    </source>
</evidence>
<evidence type="ECO:0000269" key="8">
    <source>
    </source>
</evidence>
<evidence type="ECO:0000269" key="9">
    <source>
    </source>
</evidence>
<evidence type="ECO:0000269" key="10">
    <source>
    </source>
</evidence>
<evidence type="ECO:0000269" key="11">
    <source>
    </source>
</evidence>
<evidence type="ECO:0000269" key="12">
    <source>
    </source>
</evidence>
<evidence type="ECO:0000269" key="13">
    <source>
    </source>
</evidence>
<evidence type="ECO:0000269" key="14">
    <source>
    </source>
</evidence>
<evidence type="ECO:0000269" key="15">
    <source>
    </source>
</evidence>
<evidence type="ECO:0000269" key="16">
    <source>
    </source>
</evidence>
<evidence type="ECO:0000269" key="17">
    <source>
    </source>
</evidence>
<evidence type="ECO:0000269" key="18">
    <source>
    </source>
</evidence>
<evidence type="ECO:0000269" key="19">
    <source>
    </source>
</evidence>
<evidence type="ECO:0000269" key="20">
    <source>
    </source>
</evidence>
<evidence type="ECO:0000269" key="21">
    <source>
    </source>
</evidence>
<evidence type="ECO:0000269" key="22">
    <source ref="6"/>
</evidence>
<evidence type="ECO:0000303" key="23">
    <source>
    </source>
</evidence>
<evidence type="ECO:0000305" key="24"/>
<evidence type="ECO:0000305" key="25">
    <source>
    </source>
</evidence>
<evidence type="ECO:0000305" key="26">
    <source>
    </source>
</evidence>
<evidence type="ECO:0000305" key="27">
    <source>
    </source>
</evidence>
<evidence type="ECO:0000305" key="28">
    <source>
    </source>
</evidence>
<evidence type="ECO:0007744" key="29">
    <source>
        <dbReference type="PDB" id="2E4H"/>
    </source>
</evidence>
<evidence type="ECO:0007744" key="30">
    <source>
        <dbReference type="PDB" id="7SJ7"/>
    </source>
</evidence>
<evidence type="ECO:0007744" key="31">
    <source>
        <dbReference type="PDB" id="7SJ8"/>
    </source>
</evidence>
<evidence type="ECO:0007744" key="32">
    <source>
        <dbReference type="PDB" id="7SJ9"/>
    </source>
</evidence>
<evidence type="ECO:0007744" key="33">
    <source>
        <dbReference type="PDB" id="7SJA"/>
    </source>
</evidence>
<evidence type="ECO:0007744" key="34">
    <source>
        <dbReference type="PDB" id="7Z6S"/>
    </source>
</evidence>
<evidence type="ECO:0007744" key="35">
    <source>
        <dbReference type="PDB" id="8VA2"/>
    </source>
</evidence>
<evidence type="ECO:0007744" key="36">
    <source>
        <dbReference type="PDB" id="8VRJ"/>
    </source>
</evidence>
<evidence type="ECO:0007744" key="37">
    <source>
        <dbReference type="PDB" id="8VRK"/>
    </source>
</evidence>
<evidence type="ECO:0007744" key="38">
    <source>
        <dbReference type="PDB" id="8VT7"/>
    </source>
</evidence>
<evidence type="ECO:0007829" key="39">
    <source>
        <dbReference type="PDB" id="6J8O"/>
    </source>
</evidence>
<evidence type="ECO:0007829" key="40">
    <source>
        <dbReference type="PDB" id="6S8L"/>
    </source>
</evidence>
<evidence type="ECO:0007829" key="41">
    <source>
        <dbReference type="PDB" id="7LXB"/>
    </source>
</evidence>
<evidence type="ECO:0007829" key="42">
    <source>
        <dbReference type="PDB" id="7PJF"/>
    </source>
</evidence>
<evidence type="ECO:0007829" key="43">
    <source>
        <dbReference type="PDB" id="8VT7"/>
    </source>
</evidence>
<evidence type="ECO:0007829" key="44">
    <source>
        <dbReference type="PDB" id="9BP6"/>
    </source>
</evidence>
<dbReference type="EC" id="3.6.5.-" evidence="18 21"/>
<dbReference type="EMBL" id="K00558">
    <property type="protein sequence ID" value="AAA91576.1"/>
    <property type="molecule type" value="mRNA"/>
</dbReference>
<dbReference type="EMBL" id="AF081484">
    <property type="protein sequence ID" value="AAC31959.1"/>
    <property type="molecule type" value="mRNA"/>
</dbReference>
<dbReference type="EMBL" id="DQ400107">
    <property type="protein sequence ID" value="ABD60581.1"/>
    <property type="molecule type" value="mRNA"/>
</dbReference>
<dbReference type="EMBL" id="BC000696">
    <property type="protein sequence ID" value="AAH00696.1"/>
    <property type="molecule type" value="mRNA"/>
</dbReference>
<dbReference type="EMBL" id="BC001128">
    <property type="protein sequence ID" value="AAH01128.1"/>
    <property type="molecule type" value="mRNA"/>
</dbReference>
<dbReference type="EMBL" id="BC006379">
    <property type="protein sequence ID" value="AAH06379.1"/>
    <property type="molecule type" value="mRNA"/>
</dbReference>
<dbReference type="EMBL" id="BC006481">
    <property type="protein sequence ID" value="AAH06481.1"/>
    <property type="molecule type" value="mRNA"/>
</dbReference>
<dbReference type="EMBL" id="BC008659">
    <property type="protein sequence ID" value="AAH08659.1"/>
    <property type="molecule type" value="mRNA"/>
</dbReference>
<dbReference type="EMBL" id="BC009314">
    <property type="protein sequence ID" value="AAH09314.1"/>
    <property type="molecule type" value="mRNA"/>
</dbReference>
<dbReference type="EMBL" id="BC009509">
    <property type="protein sequence ID" value="AAH09509.1"/>
    <property type="molecule type" value="mRNA"/>
</dbReference>
<dbReference type="EMBL" id="BC009512">
    <property type="protein sequence ID" value="AAH09512.1"/>
    <property type="molecule type" value="mRNA"/>
</dbReference>
<dbReference type="EMBL" id="BC009513">
    <property type="protein sequence ID" value="AAH09513.1"/>
    <property type="molecule type" value="mRNA"/>
</dbReference>
<dbReference type="EMBL" id="BC010494">
    <property type="protein sequence ID" value="AAH10494.1"/>
    <property type="molecule type" value="mRNA"/>
</dbReference>
<dbReference type="EMBL" id="BC011572">
    <property type="protein sequence ID" value="AAH11572.1"/>
    <property type="molecule type" value="mRNA"/>
</dbReference>
<dbReference type="EMBL" id="BC015883">
    <property type="protein sequence ID" value="AAH15883.1"/>
    <property type="molecule type" value="mRNA"/>
</dbReference>
<dbReference type="EMBL" id="BC017004">
    <property type="protein sequence ID" value="AAH17004.1"/>
    <property type="molecule type" value="mRNA"/>
</dbReference>
<dbReference type="EMBL" id="BC021564">
    <property type="protein sequence ID" value="AAH21564.1"/>
    <property type="molecule type" value="mRNA"/>
</dbReference>
<dbReference type="EMBL" id="BC030820">
    <property type="protein sequence ID" value="AAH30820.1"/>
    <property type="molecule type" value="mRNA"/>
</dbReference>
<dbReference type="EMBL" id="BC071904">
    <property type="protein sequence ID" value="AAH71904.1"/>
    <property type="molecule type" value="mRNA"/>
</dbReference>
<dbReference type="CCDS" id="CCDS31792.1">
    <molecule id="P68363-1"/>
</dbReference>
<dbReference type="PIR" id="I77403">
    <property type="entry name" value="I77403"/>
</dbReference>
<dbReference type="RefSeq" id="NP_006073.2">
    <molecule id="P68363-1"/>
    <property type="nucleotide sequence ID" value="NM_006082.3"/>
</dbReference>
<dbReference type="PDB" id="2E4H">
    <property type="method" value="NMR"/>
    <property type="chains" value="B=416-451"/>
</dbReference>
<dbReference type="PDB" id="5IJ0">
    <property type="method" value="EM"/>
    <property type="resolution" value="3.80 A"/>
    <property type="chains" value="A=1-437"/>
</dbReference>
<dbReference type="PDB" id="5IJ9">
    <property type="method" value="EM"/>
    <property type="resolution" value="3.70 A"/>
    <property type="chains" value="A=1-437"/>
</dbReference>
<dbReference type="PDB" id="5N5N">
    <property type="method" value="EM"/>
    <property type="resolution" value="4.00 A"/>
    <property type="chains" value="G/H/I/J/K/L=1-437"/>
</dbReference>
<dbReference type="PDB" id="6E7B">
    <property type="method" value="EM"/>
    <property type="resolution" value="3.50 A"/>
    <property type="chains" value="A=1-437"/>
</dbReference>
<dbReference type="PDB" id="6E7C">
    <property type="method" value="EM"/>
    <property type="resolution" value="3.65 A"/>
    <property type="chains" value="A=1-437"/>
</dbReference>
<dbReference type="PDB" id="6I2I">
    <property type="method" value="EM"/>
    <property type="resolution" value="3.60 A"/>
    <property type="chains" value="A=1-451"/>
</dbReference>
<dbReference type="PDB" id="6J4V">
    <property type="method" value="X-ray"/>
    <property type="resolution" value="2.10 A"/>
    <property type="chains" value="C=431-451"/>
</dbReference>
<dbReference type="PDB" id="6J8O">
    <property type="method" value="X-ray"/>
    <property type="resolution" value="1.85 A"/>
    <property type="chains" value="C=444-451"/>
</dbReference>
<dbReference type="PDB" id="6QUS">
    <property type="method" value="EM"/>
    <property type="resolution" value="3.70 A"/>
    <property type="chains" value="O/X=1-451"/>
</dbReference>
<dbReference type="PDB" id="6QUY">
    <property type="method" value="EM"/>
    <property type="resolution" value="3.80 A"/>
    <property type="chains" value="A/C=1-451"/>
</dbReference>
<dbReference type="PDB" id="6QVE">
    <property type="method" value="EM"/>
    <property type="resolution" value="3.70 A"/>
    <property type="chains" value="A/C=1-451"/>
</dbReference>
<dbReference type="PDB" id="6QVJ">
    <property type="method" value="EM"/>
    <property type="resolution" value="3.80 A"/>
    <property type="chains" value="O/X=1-451"/>
</dbReference>
<dbReference type="PDB" id="6S8L">
    <property type="method" value="X-ray"/>
    <property type="resolution" value="1.80 A"/>
    <property type="chains" value="A=1-451"/>
</dbReference>
<dbReference type="PDB" id="7LXB">
    <property type="method" value="EM"/>
    <property type="resolution" value="3.26 A"/>
    <property type="chains" value="A/C/E/G/I/K/M/O=1-451"/>
</dbReference>
<dbReference type="PDB" id="7M18">
    <property type="method" value="EM"/>
    <property type="resolution" value="3.38 A"/>
    <property type="chains" value="A/C/E/G/I/K/M/O=1-451"/>
</dbReference>
<dbReference type="PDB" id="7M20">
    <property type="method" value="EM"/>
    <property type="resolution" value="3.84 A"/>
    <property type="chains" value="A/C/E/G/I/K/M/O/Q=1-451"/>
</dbReference>
<dbReference type="PDB" id="7PJF">
    <property type="method" value="X-ray"/>
    <property type="resolution" value="1.86 A"/>
    <property type="chains" value="A=1-451"/>
</dbReference>
<dbReference type="PDB" id="7SJ7">
    <property type="method" value="EM"/>
    <property type="resolution" value="3.80 A"/>
    <property type="chains" value="A/C/E/J/K/L=1-451"/>
</dbReference>
<dbReference type="PDB" id="7SJ8">
    <property type="method" value="EM"/>
    <property type="resolution" value="3.60 A"/>
    <property type="chains" value="A/C/E/J/K/L=1-451"/>
</dbReference>
<dbReference type="PDB" id="7SJ9">
    <property type="method" value="EM"/>
    <property type="resolution" value="3.80 A"/>
    <property type="chains" value="A/C/E/J/K/L=1-451"/>
</dbReference>
<dbReference type="PDB" id="7SJA">
    <property type="method" value="EM"/>
    <property type="resolution" value="3.80 A"/>
    <property type="chains" value="A/C/E/J/K/L=1-451"/>
</dbReference>
<dbReference type="PDB" id="7Z6S">
    <property type="method" value="EM"/>
    <property type="resolution" value="2.90 A"/>
    <property type="chains" value="A/K=1-451"/>
</dbReference>
<dbReference type="PDB" id="7ZCW">
    <property type="method" value="EM"/>
    <property type="resolution" value="3.60 A"/>
    <property type="chains" value="A/E=1-451"/>
</dbReference>
<dbReference type="PDB" id="8T42">
    <property type="method" value="EM"/>
    <property type="resolution" value="3.60 A"/>
    <property type="chains" value="A/F=1-451"/>
</dbReference>
<dbReference type="PDB" id="8U3Z">
    <property type="method" value="EM"/>
    <property type="resolution" value="3.60 A"/>
    <property type="chains" value="A/F=1-451"/>
</dbReference>
<dbReference type="PDB" id="8V2J">
    <property type="method" value="EM"/>
    <property type="resolution" value="2.90 A"/>
    <property type="chains" value="A/D=1-451"/>
</dbReference>
<dbReference type="PDB" id="8VA2">
    <property type="method" value="EM"/>
    <property type="resolution" value="4.50 A"/>
    <property type="chains" value="a/b=1-451"/>
</dbReference>
<dbReference type="PDB" id="8VRJ">
    <property type="method" value="EM"/>
    <property type="resolution" value="7.70 A"/>
    <property type="chains" value="1/O/P/Q/R/S/T/U/V/W/X/Y/Z=1-451"/>
</dbReference>
<dbReference type="PDB" id="8VRK">
    <property type="method" value="EM"/>
    <property type="resolution" value="8.50 A"/>
    <property type="chains" value="1/O/P/Q/R/S/T/U/V/W/X/Y/Z=1-451"/>
</dbReference>
<dbReference type="PDB" id="8VT7">
    <property type="method" value="EM"/>
    <property type="resolution" value="2.66 A"/>
    <property type="chains" value="B/J=1-451"/>
</dbReference>
<dbReference type="PDB" id="9BP6">
    <property type="method" value="EM"/>
    <property type="resolution" value="3.10 A"/>
    <property type="chains" value="A/I=1-451"/>
</dbReference>
<dbReference type="PDBsum" id="2E4H"/>
<dbReference type="PDBsum" id="5IJ0"/>
<dbReference type="PDBsum" id="5IJ9"/>
<dbReference type="PDBsum" id="5N5N"/>
<dbReference type="PDBsum" id="6E7B"/>
<dbReference type="PDBsum" id="6E7C"/>
<dbReference type="PDBsum" id="6I2I"/>
<dbReference type="PDBsum" id="6J4V"/>
<dbReference type="PDBsum" id="6J8O"/>
<dbReference type="PDBsum" id="6QUS"/>
<dbReference type="PDBsum" id="6QUY"/>
<dbReference type="PDBsum" id="6QVE"/>
<dbReference type="PDBsum" id="6QVJ"/>
<dbReference type="PDBsum" id="6S8L"/>
<dbReference type="PDBsum" id="7LXB"/>
<dbReference type="PDBsum" id="7M18"/>
<dbReference type="PDBsum" id="7M20"/>
<dbReference type="PDBsum" id="7PJF"/>
<dbReference type="PDBsum" id="7SJ7"/>
<dbReference type="PDBsum" id="7SJ8"/>
<dbReference type="PDBsum" id="7SJ9"/>
<dbReference type="PDBsum" id="7SJA"/>
<dbReference type="PDBsum" id="7Z6S"/>
<dbReference type="PDBsum" id="7ZCW"/>
<dbReference type="PDBsum" id="8T42"/>
<dbReference type="PDBsum" id="8U3Z"/>
<dbReference type="PDBsum" id="8V2J"/>
<dbReference type="PDBsum" id="8VA2"/>
<dbReference type="PDBsum" id="8VRJ"/>
<dbReference type="PDBsum" id="8VRK"/>
<dbReference type="PDBsum" id="8VT7"/>
<dbReference type="PDBsum" id="9BP6"/>
<dbReference type="EMDB" id="EMD-0331"/>
<dbReference type="EMDB" id="EMD-14529"/>
<dbReference type="EMDB" id="EMD-14634"/>
<dbReference type="EMDB" id="EMD-23569"/>
<dbReference type="EMDB" id="EMD-23615"/>
<dbReference type="EMDB" id="EMD-23627"/>
<dbReference type="EMDB" id="EMD-25156"/>
<dbReference type="EMDB" id="EMD-25157"/>
<dbReference type="EMDB" id="EMD-25159"/>
<dbReference type="EMDB" id="EMD-25160"/>
<dbReference type="EMDB" id="EMD-32033"/>
<dbReference type="EMDB" id="EMD-3589"/>
<dbReference type="EMDB" id="EMD-41018"/>
<dbReference type="EMDB" id="EMD-42884"/>
<dbReference type="EMDB" id="EMD-42916"/>
<dbReference type="EMDB" id="EMD-43085"/>
<dbReference type="EMDB" id="EMD-43482"/>
<dbReference type="EMDB" id="EMD-43483"/>
<dbReference type="EMDB" id="EMD-43519"/>
<dbReference type="EMDB" id="EMD-44762"/>
<dbReference type="EMDB" id="EMD-4643"/>
<dbReference type="EMDB" id="EMD-4644"/>
<dbReference type="EMDB" id="EMD-4650"/>
<dbReference type="EMDB" id="EMD-4654"/>
<dbReference type="EMDB" id="EMD-8094"/>
<dbReference type="EMDB" id="EMD-8095"/>
<dbReference type="EMDB" id="EMD-8997"/>
<dbReference type="EMDB" id="EMD-8998"/>
<dbReference type="SMR" id="P68363"/>
<dbReference type="BioGRID" id="115651">
    <property type="interactions" value="514"/>
</dbReference>
<dbReference type="CORUM" id="P68363"/>
<dbReference type="FunCoup" id="P68363">
    <property type="interactions" value="1876"/>
</dbReference>
<dbReference type="IntAct" id="P68363">
    <property type="interactions" value="197"/>
</dbReference>
<dbReference type="MINT" id="P68363"/>
<dbReference type="STRING" id="9606.ENSP00000336799"/>
<dbReference type="BindingDB" id="P68363"/>
<dbReference type="ChEMBL" id="CHEMBL3797010"/>
<dbReference type="DrugBank" id="DB07574">
    <property type="generic name" value="2-MERCAPTO-N-[1,2,3,10-TETRAMETHOXY-9-OXO-5,6,7,9-TETRAHYDRO-BENZO[A]HEPTALEN-7-YL]ACETAMIDE"/>
</dbReference>
<dbReference type="DrugBank" id="DB05147">
    <property type="generic name" value="CYT997"/>
</dbReference>
<dbReference type="DrugBank" id="DB01873">
    <property type="generic name" value="Epothilone D"/>
</dbReference>
<dbReference type="DrugBank" id="DB03010">
    <property type="generic name" value="Patupilone"/>
</dbReference>
<dbReference type="DrugCentral" id="P68363"/>
<dbReference type="CarbonylDB" id="P68363"/>
<dbReference type="GlyCosmos" id="P68363">
    <property type="glycosylation" value="18 sites, 1 glycan"/>
</dbReference>
<dbReference type="GlyGen" id="P68363">
    <property type="glycosylation" value="21 sites, 1 N-linked glycan (1 site), 1 O-linked glycan (20 sites)"/>
</dbReference>
<dbReference type="iPTMnet" id="P68363"/>
<dbReference type="MetOSite" id="P68363"/>
<dbReference type="PhosphoSitePlus" id="P68363"/>
<dbReference type="SwissPalm" id="P68363"/>
<dbReference type="BioMuta" id="TUBA1B"/>
<dbReference type="DMDM" id="55977474"/>
<dbReference type="OGP" id="P68363"/>
<dbReference type="jPOST" id="P68363"/>
<dbReference type="MassIVE" id="P68363"/>
<dbReference type="PaxDb" id="9606-ENSP00000336799"/>
<dbReference type="PeptideAtlas" id="P68363"/>
<dbReference type="PRIDE" id="P68363"/>
<dbReference type="ProteomicsDB" id="57533">
    <molecule id="P68363-1"/>
</dbReference>
<dbReference type="Pumba" id="P68363"/>
<dbReference type="TopDownProteomics" id="P68363-1">
    <molecule id="P68363-1"/>
</dbReference>
<dbReference type="ABCD" id="P68363">
    <property type="antibodies" value="2 sequenced antibodies"/>
</dbReference>
<dbReference type="Antibodypedia" id="3156">
    <property type="antibodies" value="640 antibodies from 42 providers"/>
</dbReference>
<dbReference type="DNASU" id="10376"/>
<dbReference type="Ensembl" id="ENST00000336023.9">
    <molecule id="P68363-1"/>
    <property type="protein sequence ID" value="ENSP00000336799.5"/>
    <property type="gene ID" value="ENSG00000123416.15"/>
</dbReference>
<dbReference type="GeneID" id="10376"/>
<dbReference type="KEGG" id="hsa:10376"/>
<dbReference type="MANE-Select" id="ENST00000336023.9">
    <property type="protein sequence ID" value="ENSP00000336799.5"/>
    <property type="RefSeq nucleotide sequence ID" value="NM_006082.3"/>
    <property type="RefSeq protein sequence ID" value="NP_006073.2"/>
</dbReference>
<dbReference type="UCSC" id="uc001rtm.4">
    <molecule id="P68363-1"/>
    <property type="organism name" value="human"/>
</dbReference>
<dbReference type="AGR" id="HGNC:18809"/>
<dbReference type="CTD" id="10376"/>
<dbReference type="DisGeNET" id="10376"/>
<dbReference type="GeneCards" id="TUBA1B"/>
<dbReference type="HGNC" id="HGNC:18809">
    <property type="gene designation" value="TUBA1B"/>
</dbReference>
<dbReference type="HPA" id="ENSG00000123416">
    <property type="expression patterns" value="Low tissue specificity"/>
</dbReference>
<dbReference type="MIM" id="602530">
    <property type="type" value="gene"/>
</dbReference>
<dbReference type="neXtProt" id="NX_P68363"/>
<dbReference type="OpenTargets" id="ENSG00000123416"/>
<dbReference type="PharmGKB" id="PA162407332"/>
<dbReference type="VEuPathDB" id="HostDB:ENSG00000123416"/>
<dbReference type="eggNOG" id="KOG1376">
    <property type="taxonomic scope" value="Eukaryota"/>
</dbReference>
<dbReference type="GeneTree" id="ENSGT00950000182825"/>
<dbReference type="HOGENOM" id="CLU_015718_0_0_1"/>
<dbReference type="InParanoid" id="P68363"/>
<dbReference type="OMA" id="WARTRNT"/>
<dbReference type="OrthoDB" id="9540336at2759"/>
<dbReference type="PAN-GO" id="P68363">
    <property type="GO annotations" value="6 GO annotations based on evolutionary models"/>
</dbReference>
<dbReference type="PhylomeDB" id="P68363"/>
<dbReference type="TreeFam" id="TF300314"/>
<dbReference type="PathwayCommons" id="P68363"/>
<dbReference type="Reactome" id="R-HSA-1445148">
    <property type="pathway name" value="Translocation of SLC2A4 (GLUT4) to the plasma membrane"/>
</dbReference>
<dbReference type="Reactome" id="R-HSA-190840">
    <property type="pathway name" value="Microtubule-dependent trafficking of connexons from Golgi to the plasma membrane"/>
</dbReference>
<dbReference type="Reactome" id="R-HSA-190861">
    <property type="pathway name" value="Gap junction assembly"/>
</dbReference>
<dbReference type="Reactome" id="R-HSA-2132295">
    <property type="pathway name" value="MHC class II antigen presentation"/>
</dbReference>
<dbReference type="Reactome" id="R-HSA-2467813">
    <property type="pathway name" value="Separation of Sister Chromatids"/>
</dbReference>
<dbReference type="Reactome" id="R-HSA-2500257">
    <property type="pathway name" value="Resolution of Sister Chromatid Cohesion"/>
</dbReference>
<dbReference type="Reactome" id="R-HSA-3371497">
    <property type="pathway name" value="HSP90 chaperone cycle for steroid hormone receptors (SHR) in the presence of ligand"/>
</dbReference>
<dbReference type="Reactome" id="R-HSA-380320">
    <property type="pathway name" value="Recruitment of NuMA to mitotic centrosomes"/>
</dbReference>
<dbReference type="Reactome" id="R-HSA-389960">
    <property type="pathway name" value="Formation of tubulin folding intermediates by CCT/TriC"/>
</dbReference>
<dbReference type="Reactome" id="R-HSA-389977">
    <property type="pathway name" value="Post-chaperonin tubulin folding pathway"/>
</dbReference>
<dbReference type="Reactome" id="R-HSA-437239">
    <property type="pathway name" value="Recycling pathway of L1"/>
</dbReference>
<dbReference type="Reactome" id="R-HSA-5610787">
    <property type="pathway name" value="Hedgehog 'off' state"/>
</dbReference>
<dbReference type="Reactome" id="R-HSA-5617833">
    <property type="pathway name" value="Cilium Assembly"/>
</dbReference>
<dbReference type="Reactome" id="R-HSA-5620924">
    <property type="pathway name" value="Intraflagellar transport"/>
</dbReference>
<dbReference type="Reactome" id="R-HSA-5626467">
    <property type="pathway name" value="RHO GTPases activate IQGAPs"/>
</dbReference>
<dbReference type="Reactome" id="R-HSA-5663220">
    <property type="pathway name" value="RHO GTPases Activate Formins"/>
</dbReference>
<dbReference type="Reactome" id="R-HSA-6807878">
    <property type="pathway name" value="COPI-mediated anterograde transport"/>
</dbReference>
<dbReference type="Reactome" id="R-HSA-6811434">
    <property type="pathway name" value="COPI-dependent Golgi-to-ER retrograde traffic"/>
</dbReference>
<dbReference type="Reactome" id="R-HSA-6811436">
    <property type="pathway name" value="COPI-independent Golgi-to-ER retrograde traffic"/>
</dbReference>
<dbReference type="Reactome" id="R-HSA-68877">
    <property type="pathway name" value="Mitotic Prometaphase"/>
</dbReference>
<dbReference type="Reactome" id="R-HSA-8852276">
    <property type="pathway name" value="The role of GTSE1 in G2/M progression after G2 checkpoint"/>
</dbReference>
<dbReference type="Reactome" id="R-HSA-8955332">
    <property type="pathway name" value="Carboxyterminal post-translational modifications of tubulin"/>
</dbReference>
<dbReference type="Reactome" id="R-HSA-9013407">
    <property type="pathway name" value="RHOH GTPase cycle"/>
</dbReference>
<dbReference type="Reactome" id="R-HSA-9609690">
    <property type="pathway name" value="HCMV Early Events"/>
</dbReference>
<dbReference type="Reactome" id="R-HSA-9609736">
    <property type="pathway name" value="Assembly and cell surface presentation of NMDA receptors"/>
</dbReference>
<dbReference type="Reactome" id="R-HSA-9619483">
    <property type="pathway name" value="Activation of AMPK downstream of NMDARs"/>
</dbReference>
<dbReference type="Reactome" id="R-HSA-9646399">
    <property type="pathway name" value="Aggrephagy"/>
</dbReference>
<dbReference type="Reactome" id="R-HSA-9648025">
    <property type="pathway name" value="EML4 and NUDC in mitotic spindle formation"/>
</dbReference>
<dbReference type="Reactome" id="R-HSA-9668328">
    <property type="pathway name" value="Sealing of the nuclear envelope (NE) by ESCRT-III"/>
</dbReference>
<dbReference type="Reactome" id="R-HSA-983189">
    <property type="pathway name" value="Kinesins"/>
</dbReference>
<dbReference type="Reactome" id="R-HSA-9833482">
    <property type="pathway name" value="PKR-mediated signaling"/>
</dbReference>
<dbReference type="SignaLink" id="P68363"/>
<dbReference type="SIGNOR" id="P68363"/>
<dbReference type="BioGRID-ORCS" id="10376">
    <property type="hits" value="636 hits in 1112 CRISPR screens"/>
</dbReference>
<dbReference type="CD-CODE" id="232F8A39">
    <property type="entry name" value="P-body"/>
</dbReference>
<dbReference type="CD-CODE" id="91857CE7">
    <property type="entry name" value="Nucleolus"/>
</dbReference>
<dbReference type="CD-CODE" id="FB4E32DD">
    <property type="entry name" value="Presynaptic clusters and postsynaptic densities"/>
</dbReference>
<dbReference type="ChiTaRS" id="TUBA1B">
    <property type="organism name" value="human"/>
</dbReference>
<dbReference type="EvolutionaryTrace" id="P68363"/>
<dbReference type="GeneWiki" id="TUBA1B"/>
<dbReference type="GenomeRNAi" id="10376"/>
<dbReference type="Pharos" id="P68363">
    <property type="development level" value="Tchem"/>
</dbReference>
<dbReference type="PRO" id="PR:P68363"/>
<dbReference type="Proteomes" id="UP000005640">
    <property type="component" value="Chromosome 12"/>
</dbReference>
<dbReference type="RNAct" id="P68363">
    <property type="molecule type" value="protein"/>
</dbReference>
<dbReference type="Bgee" id="ENSG00000123416">
    <property type="expression patterns" value="Expressed in ventricular zone and 116 other cell types or tissues"/>
</dbReference>
<dbReference type="ExpressionAtlas" id="P68363">
    <property type="expression patterns" value="baseline and differential"/>
</dbReference>
<dbReference type="GO" id="GO:0005929">
    <property type="term" value="C:cilium"/>
    <property type="evidence" value="ECO:0000314"/>
    <property type="project" value="HPA"/>
</dbReference>
<dbReference type="GO" id="GO:0005737">
    <property type="term" value="C:cytoplasm"/>
    <property type="evidence" value="ECO:0000318"/>
    <property type="project" value="GO_Central"/>
</dbReference>
<dbReference type="GO" id="GO:0005881">
    <property type="term" value="C:cytoplasmic microtubule"/>
    <property type="evidence" value="ECO:0007669"/>
    <property type="project" value="Ensembl"/>
</dbReference>
<dbReference type="GO" id="GO:0005874">
    <property type="term" value="C:microtubule"/>
    <property type="evidence" value="ECO:0000314"/>
    <property type="project" value="UniProtKB"/>
</dbReference>
<dbReference type="GO" id="GO:0015630">
    <property type="term" value="C:microtubule cytoskeleton"/>
    <property type="evidence" value="ECO:0000314"/>
    <property type="project" value="HPA"/>
</dbReference>
<dbReference type="GO" id="GO:0003725">
    <property type="term" value="F:double-stranded RNA binding"/>
    <property type="evidence" value="ECO:0000314"/>
    <property type="project" value="MGI"/>
</dbReference>
<dbReference type="GO" id="GO:0005525">
    <property type="term" value="F:GTP binding"/>
    <property type="evidence" value="ECO:0000314"/>
    <property type="project" value="UniProtKB"/>
</dbReference>
<dbReference type="GO" id="GO:0003924">
    <property type="term" value="F:GTPase activity"/>
    <property type="evidence" value="ECO:0000314"/>
    <property type="project" value="UniProtKB"/>
</dbReference>
<dbReference type="GO" id="GO:0005200">
    <property type="term" value="F:structural constituent of cytoskeleton"/>
    <property type="evidence" value="ECO:0000314"/>
    <property type="project" value="UniProtKB"/>
</dbReference>
<dbReference type="GO" id="GO:0005198">
    <property type="term" value="F:structural molecule activity"/>
    <property type="evidence" value="ECO:0000304"/>
    <property type="project" value="BHF-UCL"/>
</dbReference>
<dbReference type="GO" id="GO:0031625">
    <property type="term" value="F:ubiquitin protein ligase binding"/>
    <property type="evidence" value="ECO:0000353"/>
    <property type="project" value="ParkinsonsUK-UCL"/>
</dbReference>
<dbReference type="GO" id="GO:0051301">
    <property type="term" value="P:cell division"/>
    <property type="evidence" value="ECO:0000304"/>
    <property type="project" value="BHF-UCL"/>
</dbReference>
<dbReference type="GO" id="GO:0071353">
    <property type="term" value="P:cellular response to interleukin-4"/>
    <property type="evidence" value="ECO:0007669"/>
    <property type="project" value="Ensembl"/>
</dbReference>
<dbReference type="GO" id="GO:0030705">
    <property type="term" value="P:cytoskeleton-dependent intracellular transport"/>
    <property type="evidence" value="ECO:0000304"/>
    <property type="project" value="BHF-UCL"/>
</dbReference>
<dbReference type="GO" id="GO:0000226">
    <property type="term" value="P:microtubule cytoskeleton organization"/>
    <property type="evidence" value="ECO:0000314"/>
    <property type="project" value="UniProtKB"/>
</dbReference>
<dbReference type="GO" id="GO:0007017">
    <property type="term" value="P:microtubule-based process"/>
    <property type="evidence" value="ECO:0000304"/>
    <property type="project" value="BHF-UCL"/>
</dbReference>
<dbReference type="GO" id="GO:0000278">
    <property type="term" value="P:mitotic cell cycle"/>
    <property type="evidence" value="ECO:0000318"/>
    <property type="project" value="GO_Central"/>
</dbReference>
<dbReference type="CDD" id="cd02186">
    <property type="entry name" value="alpha_tubulin"/>
    <property type="match status" value="1"/>
</dbReference>
<dbReference type="DisProt" id="DP02251"/>
<dbReference type="FunFam" id="1.10.287.600:FF:000005">
    <property type="entry name" value="Tubulin alpha chain"/>
    <property type="match status" value="1"/>
</dbReference>
<dbReference type="FunFam" id="3.30.1330.20:FF:000001">
    <property type="entry name" value="Tubulin alpha chain"/>
    <property type="match status" value="1"/>
</dbReference>
<dbReference type="FunFam" id="3.40.50.1440:FF:000002">
    <property type="entry name" value="Tubulin alpha chain"/>
    <property type="match status" value="1"/>
</dbReference>
<dbReference type="Gene3D" id="1.10.287.600">
    <property type="entry name" value="Helix hairpin bin"/>
    <property type="match status" value="1"/>
</dbReference>
<dbReference type="Gene3D" id="3.30.1330.20">
    <property type="entry name" value="Tubulin/FtsZ, C-terminal domain"/>
    <property type="match status" value="1"/>
</dbReference>
<dbReference type="Gene3D" id="3.40.50.1440">
    <property type="entry name" value="Tubulin/FtsZ, GTPase domain"/>
    <property type="match status" value="1"/>
</dbReference>
<dbReference type="InterPro" id="IPR002452">
    <property type="entry name" value="Alpha_tubulin"/>
</dbReference>
<dbReference type="InterPro" id="IPR008280">
    <property type="entry name" value="Tub_FtsZ_C"/>
</dbReference>
<dbReference type="InterPro" id="IPR000217">
    <property type="entry name" value="Tubulin"/>
</dbReference>
<dbReference type="InterPro" id="IPR037103">
    <property type="entry name" value="Tubulin/FtsZ-like_C"/>
</dbReference>
<dbReference type="InterPro" id="IPR018316">
    <property type="entry name" value="Tubulin/FtsZ_2-layer-sand-dom"/>
</dbReference>
<dbReference type="InterPro" id="IPR036525">
    <property type="entry name" value="Tubulin/FtsZ_GTPase_sf"/>
</dbReference>
<dbReference type="InterPro" id="IPR023123">
    <property type="entry name" value="Tubulin_C"/>
</dbReference>
<dbReference type="InterPro" id="IPR017975">
    <property type="entry name" value="Tubulin_CS"/>
</dbReference>
<dbReference type="InterPro" id="IPR003008">
    <property type="entry name" value="Tubulin_FtsZ_GTPase"/>
</dbReference>
<dbReference type="PANTHER" id="PTHR11588">
    <property type="entry name" value="TUBULIN"/>
    <property type="match status" value="1"/>
</dbReference>
<dbReference type="Pfam" id="PF00091">
    <property type="entry name" value="Tubulin"/>
    <property type="match status" value="1"/>
</dbReference>
<dbReference type="Pfam" id="PF03953">
    <property type="entry name" value="Tubulin_C"/>
    <property type="match status" value="1"/>
</dbReference>
<dbReference type="PRINTS" id="PR01162">
    <property type="entry name" value="ALPHATUBULIN"/>
</dbReference>
<dbReference type="PRINTS" id="PR01161">
    <property type="entry name" value="TUBULIN"/>
</dbReference>
<dbReference type="SMART" id="SM00864">
    <property type="entry name" value="Tubulin"/>
    <property type="match status" value="1"/>
</dbReference>
<dbReference type="SMART" id="SM00865">
    <property type="entry name" value="Tubulin_C"/>
    <property type="match status" value="1"/>
</dbReference>
<dbReference type="SUPFAM" id="SSF55307">
    <property type="entry name" value="Tubulin C-terminal domain-like"/>
    <property type="match status" value="1"/>
</dbReference>
<dbReference type="SUPFAM" id="SSF52490">
    <property type="entry name" value="Tubulin nucleotide-binding domain-like"/>
    <property type="match status" value="1"/>
</dbReference>
<dbReference type="PROSITE" id="PS00227">
    <property type="entry name" value="TUBULIN"/>
    <property type="match status" value="1"/>
</dbReference>
<reference key="1">
    <citation type="journal article" date="1983" name="Mol. Cell. Biol.">
        <title>Expression of human alpha-tubulin genes: interspecies conservation of 3' untranslated regions.</title>
        <authorList>
            <person name="Cowan N.J."/>
            <person name="Dobner P."/>
            <person name="Fuchs E.V."/>
            <person name="Cleveland D.W."/>
        </authorList>
    </citation>
    <scope>NUCLEOTIDE SEQUENCE [MRNA] (ISOFORM 1)</scope>
    <source>
        <tissue>Keratinocyte</tissue>
    </source>
</reference>
<reference key="2">
    <citation type="submission" date="1998-07" db="EMBL/GenBank/DDBJ databases">
        <authorList>
            <person name="de Hostos E.L."/>
        </authorList>
    </citation>
    <scope>NUCLEOTIDE SEQUENCE [MRNA] (ISOFORM 1)</scope>
</reference>
<reference key="3">
    <citation type="submission" date="2006-02" db="EMBL/GenBank/DDBJ databases">
        <title>Gene response of gangliocytes stimulated by Herpes simplex virus type 1.</title>
        <authorList>
            <person name="Li Q."/>
            <person name="Liu L."/>
            <person name="Ma S."/>
        </authorList>
    </citation>
    <scope>NUCLEOTIDE SEQUENCE [MRNA] (ISOFORM 1)</scope>
</reference>
<reference key="4">
    <citation type="journal article" date="2004" name="Genome Res.">
        <title>The status, quality, and expansion of the NIH full-length cDNA project: the Mammalian Gene Collection (MGC).</title>
        <authorList>
            <consortium name="The MGC Project Team"/>
        </authorList>
    </citation>
    <scope>NUCLEOTIDE SEQUENCE [LARGE SCALE MRNA] (ISOFORMS 1 AND 2)</scope>
    <source>
        <tissue>Brain</tissue>
        <tissue>Colon</tissue>
        <tissue>Eye</tissue>
        <tissue>Kidney</tissue>
        <tissue>Lung</tissue>
        <tissue>Muscle</tissue>
        <tissue>Placenta</tissue>
        <tissue>Prostate</tissue>
        <tissue>Skin</tissue>
        <tissue>Uterus</tissue>
    </source>
</reference>
<reference key="5">
    <citation type="submission" date="2008-12" db="UniProtKB">
        <authorList>
            <person name="Lubec G."/>
            <person name="Afjehi-Sadat L."/>
            <person name="Vishwanath V."/>
            <person name="Chen W.-Q."/>
            <person name="Sun Y."/>
        </authorList>
    </citation>
    <scope>PROTEIN SEQUENCE OF 41-60; 65-79; 113-121; 230-280; 312-320; 327-336; 340-370; 374-390; 395-401 AND 403-422</scope>
    <scope>IDENTIFICATION BY MASS SPECTROMETRY</scope>
    <source>
        <tissue>Brain</tissue>
        <tissue>Cajal-Retzius cell</tissue>
        <tissue>Fetal brain cortex</tissue>
    </source>
</reference>
<reference key="6">
    <citation type="submission" date="2009-03" db="UniProtKB">
        <authorList>
            <person name="Bienvenut W.V."/>
            <person name="Waridel P."/>
            <person name="Quadroni M."/>
        </authorList>
    </citation>
    <scope>PROTEIN SEQUENCE OF 41-79; 65-79; 85-121; 125-164; 216-304; 312-370 AND 374-451</scope>
    <scope>PHOSPHORYLATION AT SER-48 AND SER-232</scope>
    <scope>METHYLATION AT ARG-339</scope>
    <scope>IDENTIFICATION BY MASS SPECTROMETRY</scope>
    <source>
        <tissue>Embryonic kidney</tissue>
    </source>
</reference>
<reference key="7">
    <citation type="journal article" date="1996" name="Biochem. Biophys. Res. Commun.">
        <title>C-terminal fragments of alpha- and beta-tubulin form amyloid fibrils in vitro and associate with amyloid deposits of familial cerebral amyloid angiopathy, British type.</title>
        <authorList>
            <person name="Baumann M.H."/>
            <person name="Wisniewski T."/>
            <person name="Levy E."/>
            <person name="Plant G.T."/>
            <person name="Ghiso J."/>
        </authorList>
    </citation>
    <scope>PROTEIN SEQUENCE OF 353-370 AND 395-401</scope>
    <source>
        <tissue>Brain</tissue>
    </source>
</reference>
<reference key="8">
    <citation type="journal article" date="1999" name="Proc. Natl. Acad. Sci. U.S.A.">
        <title>Microtubule dysfunction by posttranslational nitrotyrosination of alpha-tubulin: a nitric oxide-dependent mechanism of cellular injury.</title>
        <authorList>
            <person name="Eiserich J.P."/>
            <person name="Estevez A.G."/>
            <person name="Bamberg T.V."/>
            <person name="Ye Y.Z."/>
            <person name="Chumley P.H."/>
            <person name="Beckman J.S."/>
            <person name="Freeman B.A."/>
        </authorList>
    </citation>
    <scope>PROTEIN SEQUENCE OF 439-451</scope>
    <scope>NITRATION AT TYR-451</scope>
</reference>
<reference key="9">
    <citation type="journal article" date="2009" name="Cell">
        <title>Evolutionary divergence of enzymatic mechanisms for posttranslational polyglycylation.</title>
        <authorList>
            <person name="Rogowski K."/>
            <person name="Juge F."/>
            <person name="van Dijk J."/>
            <person name="Wloga D."/>
            <person name="Strub J.-M."/>
            <person name="Levilliers N."/>
            <person name="Thomas D."/>
            <person name="Bre M.-H."/>
            <person name="Van Dorsselaer A."/>
            <person name="Gaertig J."/>
            <person name="Janke C."/>
        </authorList>
    </citation>
    <scope>GLYCYLATION</scope>
</reference>
<reference key="10">
    <citation type="journal article" date="2014" name="Cell">
        <title>Molecular basis for age-dependent microtubule acetylation by tubulin acetyltransferase.</title>
        <authorList>
            <person name="Szyk A."/>
            <person name="Deaconescu A.M."/>
            <person name="Spector J."/>
            <person name="Goodman B."/>
            <person name="Valenstein M.L."/>
            <person name="Ziolkowska N.E."/>
            <person name="Kormendi V."/>
            <person name="Grigorieff N."/>
            <person name="Roll-Mecak A."/>
        </authorList>
    </citation>
    <scope>ACETYLATION AT LYS-40</scope>
</reference>
<reference key="11">
    <citation type="journal article" date="2015" name="Proteomics">
        <title>N-terminome analysis of the human mitochondrial proteome.</title>
        <authorList>
            <person name="Vaca Jacome A.S."/>
            <person name="Rabilloud T."/>
            <person name="Schaeffer-Reiss C."/>
            <person name="Rompais M."/>
            <person name="Ayoub D."/>
            <person name="Lane L."/>
            <person name="Bairoch A."/>
            <person name="Van Dorsselaer A."/>
            <person name="Carapito C."/>
        </authorList>
    </citation>
    <scope>IDENTIFICATION BY MASS SPECTROMETRY [LARGE SCALE ANALYSIS]</scope>
</reference>
<reference key="12">
    <citation type="journal article" date="2015" name="Science">
        <title>Mitosis. Microtubule detyrosination guides chromosomes during mitosis.</title>
        <authorList>
            <person name="Barisic M."/>
            <person name="Silva e Sousa R."/>
            <person name="Tripathy S.K."/>
            <person name="Magiera M.M."/>
            <person name="Zaytsev A.V."/>
            <person name="Pereira A.L."/>
            <person name="Janke C."/>
            <person name="Grishchuk E.L."/>
            <person name="Maiato H."/>
        </authorList>
    </citation>
    <scope>DETYROSINATION</scope>
</reference>
<reference key="13">
    <citation type="journal article" date="2016" name="Cell">
        <title>Graded control of microtubule severing by tubulin glutamylation.</title>
        <authorList>
            <person name="Valenstein M.L."/>
            <person name="Roll-Mecak A."/>
        </authorList>
    </citation>
    <scope>GLUTAMYLATION</scope>
</reference>
<reference key="14">
    <citation type="journal article" date="2016" name="Cell">
        <title>Dual chromatin and cytoskeletal remodeling by SETD2.</title>
        <authorList>
            <person name="Park I.Y."/>
            <person name="Powell R.T."/>
            <person name="Tripathi D.N."/>
            <person name="Dere R."/>
            <person name="Ho T.H."/>
            <person name="Blasius T.L."/>
            <person name="Chiang Y.C."/>
            <person name="Davis I.J."/>
            <person name="Fahey C.C."/>
            <person name="Hacker K.E."/>
            <person name="Verhey K.J."/>
            <person name="Bedford M.T."/>
            <person name="Jonasch E."/>
            <person name="Rathmell W.K."/>
            <person name="Walker C.L."/>
        </authorList>
    </citation>
    <scope>METHYLATION AT LYS-40</scope>
</reference>
<reference key="15">
    <citation type="journal article" date="2016" name="Cell Rep.">
        <title>Alpha-tubulin tyrosination and CLIP-170 phosphorylation regulate the initiation of dynein-driven transport in neurons.</title>
        <authorList>
            <person name="Nirschl J.J."/>
            <person name="Magiera M.M."/>
            <person name="Lazarus J.E."/>
            <person name="Janke C."/>
            <person name="Holzbaur E.L."/>
        </authorList>
    </citation>
    <scope>TYROSINATION</scope>
</reference>
<reference key="16">
    <citation type="journal article" date="2017" name="Science">
        <title>Vasohibins encode tubulin detyrosinating activity.</title>
        <authorList>
            <person name="Nieuwenhuis J."/>
            <person name="Adamopoulos A."/>
            <person name="Bleijerveld O.B."/>
            <person name="Mazouzi A."/>
            <person name="Stickel E."/>
            <person name="Celie P."/>
            <person name="Altelaar M."/>
            <person name="Knipscheer P."/>
            <person name="Perrakis A."/>
            <person name="Blomen V.A."/>
            <person name="Brummelkamp T.R."/>
        </authorList>
    </citation>
    <scope>DETYROSINATION</scope>
</reference>
<reference key="17">
    <citation type="journal article" date="2020" name="Nat. Struct. Mol. Biol.">
        <title>Structural basis for polyglutamate chain initiation and elongation by TTLL family enzymes.</title>
        <authorList>
            <person name="Mahalingan K.K."/>
            <person name="Keith Keenan E."/>
            <person name="Strickland M."/>
            <person name="Li Y."/>
            <person name="Liu Y."/>
            <person name="Ball H.L."/>
            <person name="Tanner M.E."/>
            <person name="Tjandra N."/>
            <person name="Roll-Mecak A."/>
        </authorList>
    </citation>
    <scope>GLUTAMYLATION AT GLU-443</scope>
</reference>
<reference key="18">
    <citation type="journal article" date="2020" name="Science">
        <title>TTC5 mediates autoregulation of tubulin via mRNA degradation.</title>
        <authorList>
            <person name="Lin Z."/>
            <person name="Gasic I."/>
            <person name="Chandrasekaran V."/>
            <person name="Peters N."/>
            <person name="Shao S."/>
            <person name="Mitchison T.J."/>
            <person name="Hegde R.S."/>
        </authorList>
    </citation>
    <scope>SUBUNIT</scope>
    <scope>INDUCTION</scope>
    <scope>DOMAIN</scope>
</reference>
<reference key="19">
    <citation type="journal article" date="2024" name="Science">
        <title>Transition of human gamma-tubulin ring complex into a closed conformation during microtubule nucleation.</title>
        <authorList>
            <person name="Brito C."/>
            <person name="Serna M."/>
            <person name="Guerra P."/>
            <person name="Llorca O."/>
            <person name="Surrey T."/>
        </authorList>
    </citation>
    <scope>FUNCTION</scope>
    <scope>SUBUNIT</scope>
    <scope>MUTAGENESIS OF GLU-254</scope>
</reference>
<reference evidence="29" key="20">
    <citation type="journal article" date="2007" name="Proc. Natl. Acad. Sci. U.S.A.">
        <title>Structural basis for tubulin recognition by cytoplasmic linker protein 170 and its autoinhibition.</title>
        <authorList>
            <person name="Mishima M."/>
            <person name="Maesaki R."/>
            <person name="Kasa M."/>
            <person name="Watanabe T."/>
            <person name="Fukata M."/>
            <person name="Kaibuchi K."/>
            <person name="Hakoshima T."/>
        </authorList>
    </citation>
    <scope>STRUCTURE BY NMR OF 416-451 IN COMPLEX WITH CLIP1</scope>
</reference>
<reference evidence="30 31 32 33" key="21">
    <citation type="journal article" date="2022" name="Proc. Natl. Acad. Sci. U.S.A.">
        <title>Structural transitions in the GTP cap visualized by cryo-electron microscopy of catalytically inactive microtubules.</title>
        <authorList>
            <person name="LaFrance B.J."/>
            <person name="Roostalu J."/>
            <person name="Henkin G."/>
            <person name="Greber B.J."/>
            <person name="Zhang R."/>
            <person name="Normanno D."/>
            <person name="McCollum C.O."/>
            <person name="Surrey T."/>
            <person name="Nogales E."/>
        </authorList>
    </citation>
    <scope>STRUCTURE BY ELECTRON MICROSCOPY (3.60 ANGSTROMS) IN COMPLEX WITH BETA-TUBULIN; MAGNESIUM AND GTP</scope>
    <scope>FUNCTION</scope>
    <scope>CATALYTIC ACTIVITY</scope>
    <scope>COFACTOR</scope>
    <scope>ACTIVE SITE</scope>
    <scope>SUBCELLULAR LOCATION</scope>
    <scope>SUBUNIT</scope>
    <scope>MUTAGENESIS OF GLU-254</scope>
</reference>
<reference evidence="34" key="22">
    <citation type="journal article" date="2022" name="Science">
        <title>Posttranslational modification of microtubules by the MATCAP detyrosinase.</title>
        <authorList>
            <person name="Landskron L."/>
            <person name="Bak J."/>
            <person name="Adamopoulos A."/>
            <person name="Kaplani K."/>
            <person name="Moraiti M."/>
            <person name="van den Hengel L.G."/>
            <person name="Song J.Y."/>
            <person name="Bleijerveld O.B."/>
            <person name="Nieuwenhuis J."/>
            <person name="Heidebrecht T."/>
            <person name="Henneman L."/>
            <person name="Moutin M.J."/>
            <person name="Barisic M."/>
            <person name="Taraviras S."/>
            <person name="Perrakis A."/>
            <person name="Brummelkamp T.R."/>
        </authorList>
    </citation>
    <scope>STRUCTURE BY ELECTRON MICROSCOPY (2.9 ANGSTROMS) IN COMPLEX WITH BETA-TUBULIN; KIAA0895L; MAGNESIUM AND GTP</scope>
    <scope>COFACTOR</scope>
    <scope>SUBCELLULAR LOCATION</scope>
    <scope>SUBUNIT</scope>
</reference>
<reference evidence="35 36 37 38" key="23">
    <citation type="journal article" date="2024" name="Nat. Struct. Mol. Biol.">
        <title>Structure of the gamma-tubulin ring complex-capped microtubule.</title>
        <authorList>
            <person name="Aher A."/>
            <person name="Urnavicius L."/>
            <person name="Xue A."/>
            <person name="Neselu K."/>
            <person name="Kapoor T.M."/>
        </authorList>
    </citation>
    <scope>STRUCTURE BY ELECTRON MICROSCOPY (2.66 ANGSTROMS) IN COMPLEXES WITH MZT1; ACTB; TUBB3 AND THE GAMMA-TUBULIN RING COMPLEX</scope>
    <scope>FUNCTION</scope>
    <scope>CATALYTIC ACTIVITY</scope>
    <scope>COFACTOR</scope>
    <scope>SUBUNIT</scope>
    <scope>MUTAGENESIS OF GLU-254</scope>
</reference>
<proteinExistence type="evidence at protein level"/>
<name>TBA1B_HUMAN</name>
<keyword id="KW-0002">3D-structure</keyword>
<keyword id="KW-0007">Acetylation</keyword>
<keyword id="KW-0025">Alternative splicing</keyword>
<keyword id="KW-0963">Cytoplasm</keyword>
<keyword id="KW-0206">Cytoskeleton</keyword>
<keyword id="KW-0903">Direct protein sequencing</keyword>
<keyword id="KW-0342">GTP-binding</keyword>
<keyword id="KW-0378">Hydrolase</keyword>
<keyword id="KW-1017">Isopeptide bond</keyword>
<keyword id="KW-0488">Methylation</keyword>
<keyword id="KW-0493">Microtubule</keyword>
<keyword id="KW-0944">Nitration</keyword>
<keyword id="KW-0547">Nucleotide-binding</keyword>
<keyword id="KW-0597">Phosphoprotein</keyword>
<keyword id="KW-1267">Proteomics identification</keyword>
<keyword id="KW-1185">Reference proteome</keyword>
<keyword id="KW-0832">Ubl conjugation</keyword>
<organism>
    <name type="scientific">Homo sapiens</name>
    <name type="common">Human</name>
    <dbReference type="NCBI Taxonomy" id="9606"/>
    <lineage>
        <taxon>Eukaryota</taxon>
        <taxon>Metazoa</taxon>
        <taxon>Chordata</taxon>
        <taxon>Craniata</taxon>
        <taxon>Vertebrata</taxon>
        <taxon>Euteleostomi</taxon>
        <taxon>Mammalia</taxon>
        <taxon>Eutheria</taxon>
        <taxon>Euarchontoglires</taxon>
        <taxon>Primates</taxon>
        <taxon>Haplorrhini</taxon>
        <taxon>Catarrhini</taxon>
        <taxon>Hominidae</taxon>
        <taxon>Homo</taxon>
    </lineage>
</organism>
<gene>
    <name type="primary">TUBA1B</name>
</gene>
<protein>
    <recommendedName>
        <fullName>Tubulin alpha-1B chain</fullName>
        <ecNumber evidence="18 21">3.6.5.-</ecNumber>
    </recommendedName>
    <alternativeName>
        <fullName>Alpha-tubulin ubiquitous</fullName>
    </alternativeName>
    <alternativeName>
        <fullName>Tubulin K-alpha-1</fullName>
    </alternativeName>
    <alternativeName>
        <fullName>Tubulin alpha-ubiquitous chain</fullName>
    </alternativeName>
    <component>
        <recommendedName>
            <fullName>Detyrosinated tubulin alpha-1B chain</fullName>
        </recommendedName>
    </component>
</protein>
<accession>P68363</accession>
<accession>P04687</accession>
<accession>P05209</accession>
<accession>Q27I68</accession>
<accession>Q8WU19</accession>
<sequence>MRECISIHVGQAGVQIGNACWELYCLEHGIQPDGQMPSDKTIGGGDDSFNTFFSETGAGKHVPRAVFVDLEPTVIDEVRTGTYRQLFHPEQLITGKEDAANNYARGHYTIGKEIIDLVLDRIRKLADQCTGLQGFLVFHSFGGGTGSGFTSLLMERLSVDYGKKSKLEFSIYPAPQVSTAVVEPYNSILTTHTTLEHSDCAFMVDNEAIYDICRRNLDIERPTYTNLNRLISQIVSSITASLRFDGALNVDLTEFQTNLVPYPRIHFPLATYAPVISAEKAYHEQLSVAEITNACFEPANQMVKCDPRHGKYMACCLLYRGDVVPKDVNAAIATIKTKRSIQFVDWCPTGFKVGINYQPPTVVPGGDLAKVQRAVCMLSNTTAIAEAWARLDHKFDLMYAKRAFVHWYVGEGMEEGEFSEAREDMAALEKDYEEVGVDSVEGEGEEEGEEY</sequence>
<comment type="function">
    <text evidence="18 20 21">Tubulin is the major constituent of microtubules, protein filaments consisting of alpha- and beta-tubulin heterodimers (PubMed:38305685, PubMed:34996871, PubMed:38609661). Microtubules grow by the addition of GTP-tubulin dimers to the microtubule end, where a stabilizing cap forms (PubMed:38305685, PubMed:34996871, PubMed:38609661). Below the cap, tubulin dimers are in GDP-bound state, owing to GTPase activity of alpha-tubulin (PubMed:34996871, PubMed:38609661).</text>
</comment>
<comment type="catalytic activity">
    <reaction evidence="18 21">
        <text>GTP + H2O = GDP + phosphate + H(+)</text>
        <dbReference type="Rhea" id="RHEA:19669"/>
        <dbReference type="ChEBI" id="CHEBI:15377"/>
        <dbReference type="ChEBI" id="CHEBI:15378"/>
        <dbReference type="ChEBI" id="CHEBI:37565"/>
        <dbReference type="ChEBI" id="CHEBI:43474"/>
        <dbReference type="ChEBI" id="CHEBI:58189"/>
    </reaction>
    <physiologicalReaction direction="left-to-right" evidence="18">
        <dbReference type="Rhea" id="RHEA:19670"/>
    </physiologicalReaction>
</comment>
<comment type="cofactor">
    <cofactor evidence="18 19 21">
        <name>Mg(2+)</name>
        <dbReference type="ChEBI" id="CHEBI:18420"/>
    </cofactor>
</comment>
<comment type="subunit">
    <text evidence="3 9 16 18 19 21">Heterodimer of alpha- and beta-tubulin (PubMed:17563362, PubMed:34996871, PubMed:35482892, PubMed:38305685, PubMed:38609661). A typical microtubule is a hollow water-filled tube with an outer diameter of 25 nm and an inner diameter of 15 nM (PubMed:34996871, PubMed:35482892). Alpha-beta heterodimers associate head-to-tail to form protofilaments running lengthwise along the microtubule wall with the beta-tubulin subunit facing the microtubule plus end conferring a structural polarity (PubMed:34996871, PubMed:35482892, PubMed:38305685, PubMed:38609661). Microtubules usually have 13 protofilaments but different protofilament numbers can be found in some organisms and specialized cells (PubMed:34996871, PubMed:35482892, PubMed:38305685, PubMed:38609661). Interacts with gamma-tubulin; the interaction allows microtubules to nucleate from the gamma-tubulin ring complex (gTuRC) (PubMed:38305685, PubMed:38609661). Nascent microtubule interacts (via alpha-tubulin MREC motif) with TTC5/STRAP; this interaction may result in tubulin mRNA-targeted degradation (PubMed:31727855). Component of sperm flagellar doublet microtubules (By similarity).</text>
</comment>
<comment type="interaction">
    <interactant intactId="EBI-487083">
        <id>P68363</id>
    </interactant>
    <interactant intactId="EBI-741181">
        <id>Q6RW13</id>
        <label>AGTRAP</label>
    </interactant>
    <organismsDiffer>false</organismsDiffer>
    <experiments>3</experiments>
</comment>
<comment type="interaction">
    <interactant intactId="EBI-487083">
        <id>P68363</id>
    </interactant>
    <interactant intactId="EBI-77613">
        <id>P05067</id>
        <label>APP</label>
    </interactant>
    <organismsDiffer>false</organismsDiffer>
    <experiments>3</experiments>
</comment>
<comment type="interaction">
    <interactant intactId="EBI-487083">
        <id>P68363</id>
    </interactant>
    <interactant intactId="EBI-985879">
        <id>P37840</id>
        <label>SNCA</label>
    </interactant>
    <organismsDiffer>false</organismsDiffer>
    <experiments>3</experiments>
</comment>
<comment type="interaction">
    <interactant intactId="EBI-487083">
        <id>P68363</id>
    </interactant>
    <interactant intactId="EBI-350989">
        <id>Q13509</id>
        <label>TUBB3</label>
    </interactant>
    <organismsDiffer>false</organismsDiffer>
    <experiments>4</experiments>
</comment>
<comment type="interaction">
    <interactant intactId="EBI-487083">
        <id>P68363</id>
    </interactant>
    <interactant intactId="EBI-1185167">
        <id>Q8AZK7</id>
        <label>EBNA-LP</label>
    </interactant>
    <organismsDiffer>true</organismsDiffer>
    <experiments>3</experiments>
</comment>
<comment type="interaction">
    <interactant intactId="EBI-25895616">
        <id>P68363-2</id>
    </interactant>
    <interactant intactId="EBI-2837444">
        <id>Q8WUW1</id>
        <label>BRK1</label>
    </interactant>
    <organismsDiffer>false</organismsDiffer>
    <experiments>3</experiments>
</comment>
<comment type="interaction">
    <interactant intactId="EBI-25895616">
        <id>P68363-2</id>
    </interactant>
    <interactant intactId="EBI-356507">
        <id>P50990</id>
        <label>CCT8</label>
    </interactant>
    <organismsDiffer>false</organismsDiffer>
    <experiments>3</experiments>
</comment>
<comment type="subcellular location">
    <subcellularLocation>
        <location evidence="18 19">Cytoplasm</location>
        <location evidence="18 19">Cytoskeleton</location>
    </subcellularLocation>
</comment>
<comment type="alternative products">
    <event type="alternative splicing"/>
    <isoform>
        <id>P68363-1</id>
        <name>1</name>
        <sequence type="displayed"/>
    </isoform>
    <isoform>
        <id>P68363-2</id>
        <name>2</name>
        <sequence type="described" ref="VSP_055764"/>
    </isoform>
</comment>
<comment type="induction">
    <text evidence="16">Autoregulated by feedback control of mRNA degradation (PubMed:31727855). In excess of soluble tubulin, TTC5/STRAP cofactor triggers cotranslation degradation of tubulin mRNA (PubMed:31727855).</text>
</comment>
<comment type="domain">
    <text evidence="16">The MREC motif mediates interaction with TTC5/STRAP and may be critical for tubulin autoregulation.</text>
</comment>
<comment type="PTM">
    <text evidence="5 12">Some glutamate residues at the C-terminus are polyglutamylated, resulting in polyglutamate chains on the gamma-carboxyl group (PubMed:26875866). Polyglutamylation plays a key role in microtubule severing by spastin (SPAST). SPAST preferentially recognizes and acts on microtubules decorated with short polyglutamate tails: severing activity by SPAST increases as the number of glutamates per tubulin rises from one to eight, but decreases beyond this glutamylation threshold (PubMed:26875866). Glutamylation is also involved in cilia motility (By similarity).</text>
</comment>
<comment type="PTM">
    <text evidence="2 25">Some glutamate residues at the C-terminus are monoglycylated but not polyglycylated due to the absence of functional TTLL10 in human. Monoglycylation is mainly limited to tubulin incorporated into cilia and flagella axonemes, which is required for their stability and maintenance. Flagella glycylation controls sperm motility. Both polyglutamylation and monoglycylation can coexist on the same protein on adjacent residues, and lowering glycylation levels increases polyglutamylation, and reciprocally.</text>
</comment>
<comment type="PTM">
    <text evidence="10">Acetylation of alpha chains at Lys-40 is located inside the microtubule lumen. This modification has been correlated with increased microtubule stability, intracellular transport and ciliary assembly.</text>
</comment>
<comment type="PTM">
    <text evidence="27">Methylation of alpha chains at Lys-40 is found in mitotic microtubules and is required for normal mitosis and cytokinesis contributing to genomic stability.</text>
</comment>
<comment type="PTM">
    <text evidence="8">Nitration of Tyr-451 is irreversible and interferes with normal dynein intracellular distribution.</text>
</comment>
<comment type="PTM">
    <text evidence="11 13 15">Undergoes a tyrosination/detyrosination cycle, the cyclic removal and re-addition of a C-terminal tyrosine residue by the enzymes tubulin tyrosine carboxypeptidase (MATCAP1/KIAA0895L, VASH1 or VASH2) and tubulin tyrosine ligase (TTL), respectively.</text>
</comment>
<comment type="PTM">
    <molecule>Tubulin alpha-1B chain</molecule>
    <text evidence="1 6 13">Tyrosination promotes microtubule interaction with CAP-Gly domain-containing proteins such as CLIP1, CLIP2 and DCTN1 (By similarity). Tyrosination regulates the initiation of dynein-dynactin motility via interaction with DCTN1, which brings the dynein-dynactin complex into contact with microtubules (PubMed:26972003). In neurons, tyrosinated tubulins mediate the initiation of retrograde vesicle transport (By similarity).</text>
</comment>
<comment type="PTM">
    <molecule>Detyrosinated tubulin alpha-1B chain</molecule>
    <text evidence="1 11">Detyrosination is involved in metaphase plate congression by guiding chromosomes during mitosis: detyrosination promotes interaction with CENPE, promoting pole-proximal transport of chromosomes toward the equator (PubMed:25908662). Detyrosination increases microtubules-dependent mechanotransduction in dystrophic cardiac and skeletal muscle. In cardiomyocytes, detyrosinated microtubules are required to resist to contractile compression during contraction: detyrosination promotes association with desmin (DES) at force-generating sarcomeres, leading to buckled microtubules and mechanical resistance to contraction (By similarity).</text>
</comment>
<comment type="similarity">
    <text evidence="24">Belongs to the tubulin family.</text>
</comment>